<gene>
    <name evidence="1" type="primary">rpl16</name>
</gene>
<comment type="subunit">
    <text evidence="1">Part of the 50S ribosomal subunit.</text>
</comment>
<comment type="subcellular location">
    <subcellularLocation>
        <location>Plastid</location>
        <location>Chloroplast</location>
    </subcellularLocation>
</comment>
<comment type="similarity">
    <text evidence="1">Belongs to the universal ribosomal protein uL16 family.</text>
</comment>
<proteinExistence type="inferred from homology"/>
<sequence>MLSNPKRTRFRKQHRGRMKGISYRGNRICFGRYALQALEPTWITSRQIEAGRRAMTRYARRGGKIWVRIFPDKPVTVRPTETRMGSGKGSPEYWVSVVKPGRILYEMGGVSEIVAREAISIAASKMPIRTQFIIAG</sequence>
<protein>
    <recommendedName>
        <fullName evidence="1">Large ribosomal subunit protein uL16c</fullName>
    </recommendedName>
    <alternativeName>
        <fullName evidence="2">50S ribosomal protein L16, chloroplastic</fullName>
    </alternativeName>
</protein>
<keyword id="KW-0150">Chloroplast</keyword>
<keyword id="KW-0934">Plastid</keyword>
<keyword id="KW-0687">Ribonucleoprotein</keyword>
<keyword id="KW-0689">Ribosomal protein</keyword>
<evidence type="ECO:0000255" key="1">
    <source>
        <dbReference type="HAMAP-Rule" id="MF_01342"/>
    </source>
</evidence>
<evidence type="ECO:0000305" key="2"/>
<reference key="1">
    <citation type="journal article" date="2007" name="Mol. Phylogenet. Evol.">
        <title>Phylogenetic and evolutionary implications of complete chloroplast genome sequences of four early-diverging angiosperms: Buxus (Buxaceae), Chloranthus (Chloranthaceae), Dioscorea (Dioscoreaceae), and Illicium (Schisandraceae).</title>
        <authorList>
            <person name="Hansen D.R."/>
            <person name="Dastidar S.G."/>
            <person name="Cai Z."/>
            <person name="Penaflor C."/>
            <person name="Kuehl J.V."/>
            <person name="Boore J.L."/>
            <person name="Jansen R.K."/>
        </authorList>
    </citation>
    <scope>NUCLEOTIDE SEQUENCE [LARGE SCALE GENOMIC DNA]</scope>
</reference>
<organism>
    <name type="scientific">Buxus microphylla</name>
    <name type="common">Littleleaf boxwood</name>
    <name type="synonym">Japanese boxwood</name>
    <dbReference type="NCBI Taxonomy" id="153571"/>
    <lineage>
        <taxon>Eukaryota</taxon>
        <taxon>Viridiplantae</taxon>
        <taxon>Streptophyta</taxon>
        <taxon>Embryophyta</taxon>
        <taxon>Tracheophyta</taxon>
        <taxon>Spermatophyta</taxon>
        <taxon>Magnoliopsida</taxon>
        <taxon>Buxales</taxon>
        <taxon>Buxaceae</taxon>
        <taxon>Buxus</taxon>
    </lineage>
</organism>
<accession>A6MM74</accession>
<dbReference type="EMBL" id="EF380351">
    <property type="protein sequence ID" value="ABQ45286.1"/>
    <property type="molecule type" value="Genomic_DNA"/>
</dbReference>
<dbReference type="RefSeq" id="YP_001294222.1">
    <property type="nucleotide sequence ID" value="NC_009599.1"/>
</dbReference>
<dbReference type="SMR" id="A6MM74"/>
<dbReference type="GeneID" id="5236881"/>
<dbReference type="GO" id="GO:0009507">
    <property type="term" value="C:chloroplast"/>
    <property type="evidence" value="ECO:0007669"/>
    <property type="project" value="UniProtKB-SubCell"/>
</dbReference>
<dbReference type="GO" id="GO:0005762">
    <property type="term" value="C:mitochondrial large ribosomal subunit"/>
    <property type="evidence" value="ECO:0007669"/>
    <property type="project" value="TreeGrafter"/>
</dbReference>
<dbReference type="GO" id="GO:0019843">
    <property type="term" value="F:rRNA binding"/>
    <property type="evidence" value="ECO:0007669"/>
    <property type="project" value="InterPro"/>
</dbReference>
<dbReference type="GO" id="GO:0003735">
    <property type="term" value="F:structural constituent of ribosome"/>
    <property type="evidence" value="ECO:0007669"/>
    <property type="project" value="InterPro"/>
</dbReference>
<dbReference type="GO" id="GO:0032543">
    <property type="term" value="P:mitochondrial translation"/>
    <property type="evidence" value="ECO:0007669"/>
    <property type="project" value="TreeGrafter"/>
</dbReference>
<dbReference type="CDD" id="cd01433">
    <property type="entry name" value="Ribosomal_L16_L10e"/>
    <property type="match status" value="1"/>
</dbReference>
<dbReference type="FunFam" id="3.90.1170.10:FF:000001">
    <property type="entry name" value="50S ribosomal protein L16"/>
    <property type="match status" value="1"/>
</dbReference>
<dbReference type="Gene3D" id="3.90.1170.10">
    <property type="entry name" value="Ribosomal protein L10e/L16"/>
    <property type="match status" value="1"/>
</dbReference>
<dbReference type="HAMAP" id="MF_01342">
    <property type="entry name" value="Ribosomal_uL16"/>
    <property type="match status" value="1"/>
</dbReference>
<dbReference type="InterPro" id="IPR047873">
    <property type="entry name" value="Ribosomal_uL16"/>
</dbReference>
<dbReference type="InterPro" id="IPR000114">
    <property type="entry name" value="Ribosomal_uL16_bact-type"/>
</dbReference>
<dbReference type="InterPro" id="IPR020798">
    <property type="entry name" value="Ribosomal_uL16_CS"/>
</dbReference>
<dbReference type="InterPro" id="IPR016180">
    <property type="entry name" value="Ribosomal_uL16_dom"/>
</dbReference>
<dbReference type="InterPro" id="IPR036920">
    <property type="entry name" value="Ribosomal_uL16_sf"/>
</dbReference>
<dbReference type="NCBIfam" id="TIGR01164">
    <property type="entry name" value="rplP_bact"/>
    <property type="match status" value="1"/>
</dbReference>
<dbReference type="PANTHER" id="PTHR12220">
    <property type="entry name" value="50S/60S RIBOSOMAL PROTEIN L16"/>
    <property type="match status" value="1"/>
</dbReference>
<dbReference type="PANTHER" id="PTHR12220:SF13">
    <property type="entry name" value="LARGE RIBOSOMAL SUBUNIT PROTEIN UL16M"/>
    <property type="match status" value="1"/>
</dbReference>
<dbReference type="Pfam" id="PF00252">
    <property type="entry name" value="Ribosomal_L16"/>
    <property type="match status" value="1"/>
</dbReference>
<dbReference type="PRINTS" id="PR00060">
    <property type="entry name" value="RIBOSOMALL16"/>
</dbReference>
<dbReference type="SUPFAM" id="SSF54686">
    <property type="entry name" value="Ribosomal protein L16p/L10e"/>
    <property type="match status" value="1"/>
</dbReference>
<dbReference type="PROSITE" id="PS00586">
    <property type="entry name" value="RIBOSOMAL_L16_1"/>
    <property type="match status" value="1"/>
</dbReference>
<dbReference type="PROSITE" id="PS00701">
    <property type="entry name" value="RIBOSOMAL_L16_2"/>
    <property type="match status" value="1"/>
</dbReference>
<geneLocation type="chloroplast"/>
<feature type="chain" id="PRO_0000354618" description="Large ribosomal subunit protein uL16c">
    <location>
        <begin position="1"/>
        <end position="136"/>
    </location>
</feature>
<name>RK16_BUXMI</name>